<gene>
    <name evidence="1" type="primary">rpmD</name>
    <name type="ordered locus">XOO3564</name>
</gene>
<organism>
    <name type="scientific">Xanthomonas oryzae pv. oryzae (strain KACC10331 / KXO85)</name>
    <dbReference type="NCBI Taxonomy" id="291331"/>
    <lineage>
        <taxon>Bacteria</taxon>
        <taxon>Pseudomonadati</taxon>
        <taxon>Pseudomonadota</taxon>
        <taxon>Gammaproteobacteria</taxon>
        <taxon>Lysobacterales</taxon>
        <taxon>Lysobacteraceae</taxon>
        <taxon>Xanthomonas</taxon>
    </lineage>
</organism>
<reference key="1">
    <citation type="journal article" date="2005" name="Nucleic Acids Res.">
        <title>The genome sequence of Xanthomonas oryzae pathovar oryzae KACC10331, the bacterial blight pathogen of rice.</title>
        <authorList>
            <person name="Lee B.-M."/>
            <person name="Park Y.-J."/>
            <person name="Park D.-S."/>
            <person name="Kang H.-W."/>
            <person name="Kim J.-G."/>
            <person name="Song E.-S."/>
            <person name="Park I.-C."/>
            <person name="Yoon U.-H."/>
            <person name="Hahn J.-H."/>
            <person name="Koo B.-S."/>
            <person name="Lee G.-B."/>
            <person name="Kim H."/>
            <person name="Park H.-S."/>
            <person name="Yoon K.-O."/>
            <person name="Kim J.-H."/>
            <person name="Jung C.-H."/>
            <person name="Koh N.-H."/>
            <person name="Seo J.-S."/>
            <person name="Go S.-J."/>
        </authorList>
    </citation>
    <scope>NUCLEOTIDE SEQUENCE [LARGE SCALE GENOMIC DNA]</scope>
    <source>
        <strain>KACC10331 / KXO85</strain>
    </source>
</reference>
<evidence type="ECO:0000255" key="1">
    <source>
        <dbReference type="HAMAP-Rule" id="MF_01371"/>
    </source>
</evidence>
<evidence type="ECO:0000305" key="2"/>
<name>RL30_XANOR</name>
<accession>Q5GWV3</accession>
<protein>
    <recommendedName>
        <fullName evidence="1">Large ribosomal subunit protein uL30</fullName>
    </recommendedName>
    <alternativeName>
        <fullName evidence="2">50S ribosomal protein L30</fullName>
    </alternativeName>
</protein>
<keyword id="KW-1185">Reference proteome</keyword>
<keyword id="KW-0687">Ribonucleoprotein</keyword>
<keyword id="KW-0689">Ribosomal protein</keyword>
<dbReference type="EMBL" id="AE013598">
    <property type="protein sequence ID" value="AAW76818.1"/>
    <property type="molecule type" value="Genomic_DNA"/>
</dbReference>
<dbReference type="SMR" id="Q5GWV3"/>
<dbReference type="STRING" id="291331.XOO3564"/>
<dbReference type="KEGG" id="xoo:XOO3564"/>
<dbReference type="HOGENOM" id="CLU_131047_1_4_6"/>
<dbReference type="Proteomes" id="UP000006735">
    <property type="component" value="Chromosome"/>
</dbReference>
<dbReference type="GO" id="GO:0022625">
    <property type="term" value="C:cytosolic large ribosomal subunit"/>
    <property type="evidence" value="ECO:0007669"/>
    <property type="project" value="TreeGrafter"/>
</dbReference>
<dbReference type="GO" id="GO:0003735">
    <property type="term" value="F:structural constituent of ribosome"/>
    <property type="evidence" value="ECO:0007669"/>
    <property type="project" value="InterPro"/>
</dbReference>
<dbReference type="GO" id="GO:0006412">
    <property type="term" value="P:translation"/>
    <property type="evidence" value="ECO:0007669"/>
    <property type="project" value="UniProtKB-UniRule"/>
</dbReference>
<dbReference type="CDD" id="cd00355">
    <property type="entry name" value="Ribosomal_L30_like"/>
    <property type="match status" value="1"/>
</dbReference>
<dbReference type="FunFam" id="3.30.1390.20:FF:000006">
    <property type="entry name" value="50S ribosomal protein L30"/>
    <property type="match status" value="1"/>
</dbReference>
<dbReference type="Gene3D" id="3.30.1390.20">
    <property type="entry name" value="Ribosomal protein L30, ferredoxin-like fold domain"/>
    <property type="match status" value="1"/>
</dbReference>
<dbReference type="HAMAP" id="MF_01371_B">
    <property type="entry name" value="Ribosomal_uL30_B"/>
    <property type="match status" value="1"/>
</dbReference>
<dbReference type="InterPro" id="IPR036919">
    <property type="entry name" value="Ribo_uL30_ferredoxin-like_sf"/>
</dbReference>
<dbReference type="InterPro" id="IPR005996">
    <property type="entry name" value="Ribosomal_uL30_bac-type"/>
</dbReference>
<dbReference type="InterPro" id="IPR016082">
    <property type="entry name" value="Ribosomal_uL30_ferredoxin-like"/>
</dbReference>
<dbReference type="NCBIfam" id="TIGR01308">
    <property type="entry name" value="rpmD_bact"/>
    <property type="match status" value="1"/>
</dbReference>
<dbReference type="PANTHER" id="PTHR15892:SF2">
    <property type="entry name" value="LARGE RIBOSOMAL SUBUNIT PROTEIN UL30M"/>
    <property type="match status" value="1"/>
</dbReference>
<dbReference type="PANTHER" id="PTHR15892">
    <property type="entry name" value="MITOCHONDRIAL RIBOSOMAL PROTEIN L30"/>
    <property type="match status" value="1"/>
</dbReference>
<dbReference type="Pfam" id="PF00327">
    <property type="entry name" value="Ribosomal_L30"/>
    <property type="match status" value="1"/>
</dbReference>
<dbReference type="PIRSF" id="PIRSF002211">
    <property type="entry name" value="Ribosomal_L30_bac-type"/>
    <property type="match status" value="1"/>
</dbReference>
<dbReference type="SUPFAM" id="SSF55129">
    <property type="entry name" value="Ribosomal protein L30p/L7e"/>
    <property type="match status" value="1"/>
</dbReference>
<comment type="subunit">
    <text evidence="1">Part of the 50S ribosomal subunit.</text>
</comment>
<comment type="similarity">
    <text evidence="1">Belongs to the universal ribosomal protein uL30 family.</text>
</comment>
<sequence length="63" mass="7207">MAKDTNKTVKVRLVRGLRGTQSRHRLSVRALGLNKLNDVRELKDSPQVRGLINTVHYLVKVEE</sequence>
<proteinExistence type="inferred from homology"/>
<feature type="chain" id="PRO_0000347155" description="Large ribosomal subunit protein uL30">
    <location>
        <begin position="1"/>
        <end position="63"/>
    </location>
</feature>